<organism>
    <name type="scientific">Streptococcus pneumoniae (strain ATCC 700669 / Spain 23F-1)</name>
    <dbReference type="NCBI Taxonomy" id="561276"/>
    <lineage>
        <taxon>Bacteria</taxon>
        <taxon>Bacillati</taxon>
        <taxon>Bacillota</taxon>
        <taxon>Bacilli</taxon>
        <taxon>Lactobacillales</taxon>
        <taxon>Streptococcaceae</taxon>
        <taxon>Streptococcus</taxon>
    </lineage>
</organism>
<sequence length="82" mass="9941">MFEKVNRSGLIIYLYYNRDAKKLQDYGDITYHSKKHRYLQLYVPTQEVEQLVGRLSKEKFIKKVRVCHIQELETPFVGNLYR</sequence>
<feature type="chain" id="PRO_1000164064" description="UPF0298 protein SPN23F06710">
    <location>
        <begin position="1"/>
        <end position="82"/>
    </location>
</feature>
<name>Y671_STRPJ</name>
<comment type="subcellular location">
    <subcellularLocation>
        <location evidence="1">Cytoplasm</location>
    </subcellularLocation>
</comment>
<comment type="similarity">
    <text evidence="1">Belongs to the UPF0298 family.</text>
</comment>
<gene>
    <name type="ordered locus">SPN23F06710</name>
</gene>
<reference key="1">
    <citation type="journal article" date="2009" name="J. Bacteriol.">
        <title>Role of conjugative elements in the evolution of the multidrug-resistant pandemic clone Streptococcus pneumoniae Spain23F ST81.</title>
        <authorList>
            <person name="Croucher N.J."/>
            <person name="Walker D."/>
            <person name="Romero P."/>
            <person name="Lennard N."/>
            <person name="Paterson G.K."/>
            <person name="Bason N.C."/>
            <person name="Mitchell A.M."/>
            <person name="Quail M.A."/>
            <person name="Andrew P.W."/>
            <person name="Parkhill J."/>
            <person name="Bentley S.D."/>
            <person name="Mitchell T.J."/>
        </authorList>
    </citation>
    <scope>NUCLEOTIDE SEQUENCE [LARGE SCALE GENOMIC DNA]</scope>
    <source>
        <strain>ATCC 700669 / Spain 23F-1</strain>
    </source>
</reference>
<proteinExistence type="inferred from homology"/>
<dbReference type="EMBL" id="FM211187">
    <property type="protein sequence ID" value="CAR68517.1"/>
    <property type="molecule type" value="Genomic_DNA"/>
</dbReference>
<dbReference type="RefSeq" id="WP_000462126.1">
    <property type="nucleotide sequence ID" value="NC_011900.1"/>
</dbReference>
<dbReference type="SMR" id="B8ZN40"/>
<dbReference type="KEGG" id="sne:SPN23F06710"/>
<dbReference type="HOGENOM" id="CLU_159890_1_0_9"/>
<dbReference type="GO" id="GO:0005737">
    <property type="term" value="C:cytoplasm"/>
    <property type="evidence" value="ECO:0007669"/>
    <property type="project" value="UniProtKB-SubCell"/>
</dbReference>
<dbReference type="HAMAP" id="MF_01126">
    <property type="entry name" value="UPF0298"/>
    <property type="match status" value="1"/>
</dbReference>
<dbReference type="InterPro" id="IPR016979">
    <property type="entry name" value="DUF2129"/>
</dbReference>
<dbReference type="NCBIfam" id="NF002631">
    <property type="entry name" value="PRK02302.1"/>
    <property type="match status" value="1"/>
</dbReference>
<dbReference type="Pfam" id="PF09902">
    <property type="entry name" value="DUF2129"/>
    <property type="match status" value="1"/>
</dbReference>
<dbReference type="PIRSF" id="PIRSF031653">
    <property type="entry name" value="UCP031653"/>
    <property type="match status" value="1"/>
</dbReference>
<evidence type="ECO:0000255" key="1">
    <source>
        <dbReference type="HAMAP-Rule" id="MF_01126"/>
    </source>
</evidence>
<keyword id="KW-0963">Cytoplasm</keyword>
<accession>B8ZN40</accession>
<protein>
    <recommendedName>
        <fullName evidence="1">UPF0298 protein SPN23F06710</fullName>
    </recommendedName>
</protein>